<name>NMRL1_BOVIN</name>
<reference key="1">
    <citation type="submission" date="2006-08" db="EMBL/GenBank/DDBJ databases">
        <authorList>
            <consortium name="NIH - Mammalian Gene Collection (MGC) project"/>
        </authorList>
    </citation>
    <scope>NUCLEOTIDE SEQUENCE [LARGE SCALE MRNA]</scope>
    <source>
        <strain>Hereford</strain>
        <tissue>Fetal lung</tissue>
    </source>
</reference>
<keyword id="KW-0963">Cytoplasm</keyword>
<keyword id="KW-0521">NADP</keyword>
<keyword id="KW-0539">Nucleus</keyword>
<keyword id="KW-1185">Reference proteome</keyword>
<dbReference type="EMBL" id="BC120089">
    <property type="protein sequence ID" value="AAI20090.1"/>
    <property type="molecule type" value="mRNA"/>
</dbReference>
<dbReference type="RefSeq" id="NP_001069500.1">
    <property type="nucleotide sequence ID" value="NM_001076032.2"/>
</dbReference>
<dbReference type="RefSeq" id="XP_005224578.3">
    <property type="nucleotide sequence ID" value="XM_005224521.5"/>
</dbReference>
<dbReference type="RefSeq" id="XP_059737373.1">
    <property type="nucleotide sequence ID" value="XM_059881390.1"/>
</dbReference>
<dbReference type="SMR" id="Q0VCN1"/>
<dbReference type="FunCoup" id="Q0VCN1">
    <property type="interactions" value="555"/>
</dbReference>
<dbReference type="STRING" id="9913.ENSBTAP00000065595"/>
<dbReference type="PaxDb" id="9913-ENSBTAP00000013208"/>
<dbReference type="PeptideAtlas" id="Q0VCN1"/>
<dbReference type="GeneID" id="534628"/>
<dbReference type="KEGG" id="bta:534628"/>
<dbReference type="CTD" id="57407"/>
<dbReference type="VEuPathDB" id="HostDB:ENSBTAG00000010015"/>
<dbReference type="eggNOG" id="ENOG502RG69">
    <property type="taxonomic scope" value="Eukaryota"/>
</dbReference>
<dbReference type="HOGENOM" id="CLU_007383_8_2_1"/>
<dbReference type="InParanoid" id="Q0VCN1"/>
<dbReference type="OMA" id="FMENTVA"/>
<dbReference type="OrthoDB" id="300709at2759"/>
<dbReference type="TreeFam" id="TF335532"/>
<dbReference type="Reactome" id="R-BTA-70635">
    <property type="pathway name" value="Urea cycle"/>
</dbReference>
<dbReference type="Proteomes" id="UP000009136">
    <property type="component" value="Chromosome 25"/>
</dbReference>
<dbReference type="Bgee" id="ENSBTAG00000010015">
    <property type="expression patterns" value="Expressed in digestive system secreted substance and 104 other cell types or tissues"/>
</dbReference>
<dbReference type="GO" id="GO:0005634">
    <property type="term" value="C:nucleus"/>
    <property type="evidence" value="ECO:0000318"/>
    <property type="project" value="GO_Central"/>
</dbReference>
<dbReference type="GO" id="GO:0048471">
    <property type="term" value="C:perinuclear region of cytoplasm"/>
    <property type="evidence" value="ECO:0007669"/>
    <property type="project" value="UniProtKB-SubCell"/>
</dbReference>
<dbReference type="CDD" id="cd05251">
    <property type="entry name" value="NmrA_like_SDR_a"/>
    <property type="match status" value="1"/>
</dbReference>
<dbReference type="FunFam" id="3.40.50.720:FF:000181">
    <property type="entry name" value="NmrA-like family domain-containing protein 1"/>
    <property type="match status" value="1"/>
</dbReference>
<dbReference type="Gene3D" id="3.40.50.720">
    <property type="entry name" value="NAD(P)-binding Rossmann-like Domain"/>
    <property type="match status" value="1"/>
</dbReference>
<dbReference type="Gene3D" id="3.90.25.10">
    <property type="entry name" value="UDP-galactose 4-epimerase, domain 1"/>
    <property type="match status" value="1"/>
</dbReference>
<dbReference type="InterPro" id="IPR036291">
    <property type="entry name" value="NAD(P)-bd_dom_sf"/>
</dbReference>
<dbReference type="InterPro" id="IPR008030">
    <property type="entry name" value="NmrA-like"/>
</dbReference>
<dbReference type="InterPro" id="IPR051164">
    <property type="entry name" value="NmrA-like_oxidored"/>
</dbReference>
<dbReference type="PANTHER" id="PTHR42748">
    <property type="entry name" value="NITROGEN METABOLITE REPRESSION PROTEIN NMRA FAMILY MEMBER"/>
    <property type="match status" value="1"/>
</dbReference>
<dbReference type="PANTHER" id="PTHR42748:SF16">
    <property type="entry name" value="NMRA-LIKE FAMILY DOMAIN-CONTAINING PROTEIN 1"/>
    <property type="match status" value="1"/>
</dbReference>
<dbReference type="Pfam" id="PF05368">
    <property type="entry name" value="NmrA"/>
    <property type="match status" value="1"/>
</dbReference>
<dbReference type="SUPFAM" id="SSF51735">
    <property type="entry name" value="NAD(P)-binding Rossmann-fold domains"/>
    <property type="match status" value="1"/>
</dbReference>
<protein>
    <recommendedName>
        <fullName>NmrA-like family domain-containing protein 1</fullName>
    </recommendedName>
</protein>
<organism>
    <name type="scientific">Bos taurus</name>
    <name type="common">Bovine</name>
    <dbReference type="NCBI Taxonomy" id="9913"/>
    <lineage>
        <taxon>Eukaryota</taxon>
        <taxon>Metazoa</taxon>
        <taxon>Chordata</taxon>
        <taxon>Craniata</taxon>
        <taxon>Vertebrata</taxon>
        <taxon>Euteleostomi</taxon>
        <taxon>Mammalia</taxon>
        <taxon>Eutheria</taxon>
        <taxon>Laurasiatheria</taxon>
        <taxon>Artiodactyla</taxon>
        <taxon>Ruminantia</taxon>
        <taxon>Pecora</taxon>
        <taxon>Bovidae</taxon>
        <taxon>Bovinae</taxon>
        <taxon>Bos</taxon>
    </lineage>
</organism>
<feature type="chain" id="PRO_0000278203" description="NmrA-like family domain-containing protein 1">
    <location>
        <begin position="1"/>
        <end position="299"/>
    </location>
</feature>
<feature type="region of interest" description="Interaction with ASS1" evidence="1">
    <location>
        <begin position="153"/>
        <end position="189"/>
    </location>
</feature>
<feature type="binding site" description="in other chain" evidence="1">
    <location>
        <begin position="11"/>
        <end position="16"/>
    </location>
    <ligand>
        <name>NADP(+)</name>
        <dbReference type="ChEBI" id="CHEBI:58349"/>
        <note>ligand shared between dimeric partners</note>
    </ligand>
</feature>
<feature type="binding site" description="in other chain" evidence="1">
    <location>
        <begin position="37"/>
        <end position="41"/>
    </location>
    <ligand>
        <name>NADP(+)</name>
        <dbReference type="ChEBI" id="CHEBI:58349"/>
        <note>ligand shared between dimeric partners</note>
    </ligand>
</feature>
<feature type="binding site" description="in other chain" evidence="1">
    <location>
        <begin position="58"/>
        <end position="59"/>
    </location>
    <ligand>
        <name>NADP(+)</name>
        <dbReference type="ChEBI" id="CHEBI:58349"/>
        <note>ligand shared between dimeric partners</note>
    </ligand>
</feature>
<feature type="binding site" description="in other chain" evidence="1">
    <location>
        <begin position="79"/>
        <end position="81"/>
    </location>
    <ligand>
        <name>NADP(+)</name>
        <dbReference type="ChEBI" id="CHEBI:58349"/>
        <note>ligand shared between dimeric partners</note>
    </ligand>
</feature>
<feature type="binding site" evidence="1">
    <location>
        <position position="92"/>
    </location>
    <ligand>
        <name>NADP(+)</name>
        <dbReference type="ChEBI" id="CHEBI:58349"/>
        <note>ligand shared between dimeric partners</note>
    </ligand>
</feature>
<feature type="binding site" description="in other chain" evidence="1">
    <location>
        <position position="133"/>
    </location>
    <ligand>
        <name>NADP(+)</name>
        <dbReference type="ChEBI" id="CHEBI:58349"/>
        <note>ligand shared between dimeric partners</note>
    </ligand>
</feature>
<feature type="binding site" description="in other chain" evidence="1">
    <location>
        <begin position="155"/>
        <end position="158"/>
    </location>
    <ligand>
        <name>NADP(+)</name>
        <dbReference type="ChEBI" id="CHEBI:58349"/>
        <note>ligand shared between dimeric partners</note>
    </ligand>
</feature>
<proteinExistence type="evidence at transcript level"/>
<sequence>MADKKLVVVFGATGAQGGSVARTLLEDGTFRVRVVTRDPGQRAAKQLRLQGAEVVQGDQDDEASMELALSGAHATFIVTNYWENCSQEQEVKQGKLLADLAKRLGLRYVVYSGLENIKKLTAGRLTVGHFDGKGEVEEYFRDIGVPMTSVRLPCYFENLLSYFLPQKAPDGRSYLLSLPMGDVPIDGMSVADLGPVVLSLLKTPEEYVGRNIGLSTCRHTVEEYAALLTKHTGKAVRDAKTSPEDYEKLGFPGAQDLANMFRFYALKPDRNIELTLKLNPKARRLDQWLEQHKEDFAGL</sequence>
<accession>Q0VCN1</accession>
<comment type="function">
    <text evidence="1">Redox sensor protein. Undergoes restructuring and subcellular redistribution in response to changes in intracellular NADPH/NADP(+) levels. At low NADPH concentrations the protein is found mainly as a monomer, and binds argininosuccinate synthase (ASS1), the enzyme involved in nitric oxide synthesis. Association with ASS1 impairs its activity and reduces the production of nitric oxide, which subsecuently prevents apoptosis. Under normal NADPH concentrations, the protein is found as a dimer and hides the binding site for ASS1. The homodimer binds one molecule of NADPH. Has higher affinity for NADPH than for NADP(+). Binding to NADPH is necessary to form a stable dimer (By similarity).</text>
</comment>
<comment type="subunit">
    <text evidence="1">Homodimer. Interacts with ASS1. Interaction is enhanced by low NADPH/NADP(+) ratios, which results in inhibition of ASS1 activity (By similarity).</text>
</comment>
<comment type="subcellular location">
    <subcellularLocation>
        <location>Cytoplasm</location>
    </subcellularLocation>
    <subcellularLocation>
        <location>Cytoplasm</location>
        <location>Perinuclear region</location>
    </subcellularLocation>
    <subcellularLocation>
        <location>Nucleus</location>
    </subcellularLocation>
    <text evidence="1">Under normal redox growth conditions localizes in the cytoplasm and perinuclear region. Nuclear localization is promoted by increased intracellular nitric oxide and reduced NADPH/NADP(+) ratios (By similarity).</text>
</comment>
<comment type="similarity">
    <text evidence="2">Belongs to the NmrA-type oxidoreductase family.</text>
</comment>
<comment type="caution">
    <text evidence="2">Lacks the conserved Tyr residue in the active site triad of Ser-Tyr-Lys necessary for dehydrogenase activity, suggesting that it has no oxidoreductase activity.</text>
</comment>
<gene>
    <name type="primary">NMRAL1</name>
</gene>
<evidence type="ECO:0000250" key="1"/>
<evidence type="ECO:0000305" key="2"/>